<reference key="1">
    <citation type="journal article" date="2007" name="Mol. Phylogenet. Evol.">
        <title>Phylogenetic and evolutionary implications of complete chloroplast genome sequences of four early-diverging angiosperms: Buxus (Buxaceae), Chloranthus (Chloranthaceae), Dioscorea (Dioscoreaceae), and Illicium (Schisandraceae).</title>
        <authorList>
            <person name="Hansen D.R."/>
            <person name="Dastidar S.G."/>
            <person name="Cai Z."/>
            <person name="Penaflor C."/>
            <person name="Kuehl J.V."/>
            <person name="Boore J.L."/>
            <person name="Jansen R.K."/>
        </authorList>
    </citation>
    <scope>NUCLEOTIDE SEQUENCE [LARGE SCALE GENOMIC DNA]</scope>
</reference>
<name>RR11_DIOEL</name>
<keyword id="KW-0150">Chloroplast</keyword>
<keyword id="KW-0934">Plastid</keyword>
<keyword id="KW-0687">Ribonucleoprotein</keyword>
<keyword id="KW-0689">Ribosomal protein</keyword>
<keyword id="KW-0694">RNA-binding</keyword>
<keyword id="KW-0699">rRNA-binding</keyword>
<organism>
    <name type="scientific">Dioscorea elephantipes</name>
    <name type="common">Elephant's foot yam</name>
    <name type="synonym">Testudinaria elephantipes</name>
    <dbReference type="NCBI Taxonomy" id="145284"/>
    <lineage>
        <taxon>Eukaryota</taxon>
        <taxon>Viridiplantae</taxon>
        <taxon>Streptophyta</taxon>
        <taxon>Embryophyta</taxon>
        <taxon>Tracheophyta</taxon>
        <taxon>Spermatophyta</taxon>
        <taxon>Magnoliopsida</taxon>
        <taxon>Liliopsida</taxon>
        <taxon>Dioscoreales</taxon>
        <taxon>Dioscoreaceae</taxon>
        <taxon>Dioscorea</taxon>
    </lineage>
</organism>
<evidence type="ECO:0000255" key="1">
    <source>
        <dbReference type="HAMAP-Rule" id="MF_01310"/>
    </source>
</evidence>
<evidence type="ECO:0000256" key="2">
    <source>
        <dbReference type="SAM" id="MobiDB-lite"/>
    </source>
</evidence>
<evidence type="ECO:0000305" key="3"/>
<sequence>MTKPIPRIGSRRNGRIGSRKNARRIPKGVIHVQASFNNTIVTVSDVRGQVISWASAGTSGFKGTRRGTPYAAQAAAVNAIRTIIDQDMQRAEVMIKGAGFGRDAALRAIRRSGILLSFVRDVTPMPHNGCRPPQKRRV</sequence>
<proteinExistence type="inferred from homology"/>
<gene>
    <name evidence="1" type="primary">rps11</name>
</gene>
<dbReference type="EMBL" id="EF380353">
    <property type="protein sequence ID" value="ABR01462.1"/>
    <property type="molecule type" value="Genomic_DNA"/>
</dbReference>
<dbReference type="RefSeq" id="YP_001294385.1">
    <property type="nucleotide sequence ID" value="NC_009601.1"/>
</dbReference>
<dbReference type="SMR" id="A6MMP0"/>
<dbReference type="GeneID" id="5236630"/>
<dbReference type="GO" id="GO:0009507">
    <property type="term" value="C:chloroplast"/>
    <property type="evidence" value="ECO:0007669"/>
    <property type="project" value="UniProtKB-SubCell"/>
</dbReference>
<dbReference type="GO" id="GO:1990904">
    <property type="term" value="C:ribonucleoprotein complex"/>
    <property type="evidence" value="ECO:0007669"/>
    <property type="project" value="UniProtKB-KW"/>
</dbReference>
<dbReference type="GO" id="GO:0005840">
    <property type="term" value="C:ribosome"/>
    <property type="evidence" value="ECO:0007669"/>
    <property type="project" value="UniProtKB-KW"/>
</dbReference>
<dbReference type="GO" id="GO:0019843">
    <property type="term" value="F:rRNA binding"/>
    <property type="evidence" value="ECO:0007669"/>
    <property type="project" value="UniProtKB-UniRule"/>
</dbReference>
<dbReference type="GO" id="GO:0003735">
    <property type="term" value="F:structural constituent of ribosome"/>
    <property type="evidence" value="ECO:0007669"/>
    <property type="project" value="InterPro"/>
</dbReference>
<dbReference type="GO" id="GO:0006412">
    <property type="term" value="P:translation"/>
    <property type="evidence" value="ECO:0007669"/>
    <property type="project" value="UniProtKB-UniRule"/>
</dbReference>
<dbReference type="FunFam" id="3.30.420.80:FF:000003">
    <property type="entry name" value="30S ribosomal protein S11, chloroplastic"/>
    <property type="match status" value="1"/>
</dbReference>
<dbReference type="Gene3D" id="3.30.420.80">
    <property type="entry name" value="Ribosomal protein S11"/>
    <property type="match status" value="1"/>
</dbReference>
<dbReference type="HAMAP" id="MF_01310">
    <property type="entry name" value="Ribosomal_uS11"/>
    <property type="match status" value="1"/>
</dbReference>
<dbReference type="InterPro" id="IPR001971">
    <property type="entry name" value="Ribosomal_uS11"/>
</dbReference>
<dbReference type="InterPro" id="IPR019981">
    <property type="entry name" value="Ribosomal_uS11_bac-type"/>
</dbReference>
<dbReference type="InterPro" id="IPR018102">
    <property type="entry name" value="Ribosomal_uS11_CS"/>
</dbReference>
<dbReference type="InterPro" id="IPR036967">
    <property type="entry name" value="Ribosomal_uS11_sf"/>
</dbReference>
<dbReference type="NCBIfam" id="NF003698">
    <property type="entry name" value="PRK05309.1"/>
    <property type="match status" value="1"/>
</dbReference>
<dbReference type="NCBIfam" id="TIGR03632">
    <property type="entry name" value="uS11_bact"/>
    <property type="match status" value="1"/>
</dbReference>
<dbReference type="PANTHER" id="PTHR11759">
    <property type="entry name" value="40S RIBOSOMAL PROTEIN S14/30S RIBOSOMAL PROTEIN S11"/>
    <property type="match status" value="1"/>
</dbReference>
<dbReference type="Pfam" id="PF00411">
    <property type="entry name" value="Ribosomal_S11"/>
    <property type="match status" value="1"/>
</dbReference>
<dbReference type="PIRSF" id="PIRSF002131">
    <property type="entry name" value="Ribosomal_S11"/>
    <property type="match status" value="1"/>
</dbReference>
<dbReference type="SUPFAM" id="SSF53137">
    <property type="entry name" value="Translational machinery components"/>
    <property type="match status" value="1"/>
</dbReference>
<dbReference type="PROSITE" id="PS00054">
    <property type="entry name" value="RIBOSOMAL_S11"/>
    <property type="match status" value="1"/>
</dbReference>
<comment type="subunit">
    <text evidence="1">Part of the 30S ribosomal subunit.</text>
</comment>
<comment type="subcellular location">
    <subcellularLocation>
        <location>Plastid</location>
        <location>Chloroplast</location>
    </subcellularLocation>
</comment>
<comment type="similarity">
    <text evidence="1">Belongs to the universal ribosomal protein uS11 family.</text>
</comment>
<protein>
    <recommendedName>
        <fullName evidence="1">Small ribosomal subunit protein uS11c</fullName>
    </recommendedName>
    <alternativeName>
        <fullName evidence="3">30S ribosomal protein S11, chloroplastic</fullName>
    </alternativeName>
</protein>
<geneLocation type="chloroplast"/>
<feature type="chain" id="PRO_0000323364" description="Small ribosomal subunit protein uS11c">
    <location>
        <begin position="1"/>
        <end position="138"/>
    </location>
</feature>
<feature type="region of interest" description="Disordered" evidence="2">
    <location>
        <begin position="1"/>
        <end position="22"/>
    </location>
</feature>
<feature type="compositionally biased region" description="Basic residues" evidence="2">
    <location>
        <begin position="9"/>
        <end position="22"/>
    </location>
</feature>
<accession>A6MMP0</accession>